<comment type="function">
    <text evidence="1">The RecF protein is involved in DNA metabolism; it is required for DNA replication and normal SOS inducibility. RecF binds preferentially to single-stranded, linear DNA. It also seems to bind ATP.</text>
</comment>
<comment type="subcellular location">
    <subcellularLocation>
        <location evidence="1">Cytoplasm</location>
    </subcellularLocation>
</comment>
<comment type="similarity">
    <text evidence="1">Belongs to the RecF family.</text>
</comment>
<dbReference type="EMBL" id="CP000133">
    <property type="protein sequence ID" value="ABC88966.1"/>
    <property type="molecule type" value="Genomic_DNA"/>
</dbReference>
<dbReference type="RefSeq" id="WP_011423535.1">
    <property type="nucleotide sequence ID" value="NC_007761.1"/>
</dbReference>
<dbReference type="SMR" id="Q2KDX0"/>
<dbReference type="KEGG" id="ret:RHE_CH00141"/>
<dbReference type="eggNOG" id="COG1195">
    <property type="taxonomic scope" value="Bacteria"/>
</dbReference>
<dbReference type="HOGENOM" id="CLU_040267_2_0_5"/>
<dbReference type="OrthoDB" id="9803889at2"/>
<dbReference type="Proteomes" id="UP000001936">
    <property type="component" value="Chromosome"/>
</dbReference>
<dbReference type="GO" id="GO:0005737">
    <property type="term" value="C:cytoplasm"/>
    <property type="evidence" value="ECO:0007669"/>
    <property type="project" value="UniProtKB-SubCell"/>
</dbReference>
<dbReference type="GO" id="GO:0005524">
    <property type="term" value="F:ATP binding"/>
    <property type="evidence" value="ECO:0007669"/>
    <property type="project" value="UniProtKB-UniRule"/>
</dbReference>
<dbReference type="GO" id="GO:0016887">
    <property type="term" value="F:ATP hydrolysis activity"/>
    <property type="evidence" value="ECO:0007669"/>
    <property type="project" value="InterPro"/>
</dbReference>
<dbReference type="GO" id="GO:0003697">
    <property type="term" value="F:single-stranded DNA binding"/>
    <property type="evidence" value="ECO:0007669"/>
    <property type="project" value="UniProtKB-UniRule"/>
</dbReference>
<dbReference type="GO" id="GO:0006260">
    <property type="term" value="P:DNA replication"/>
    <property type="evidence" value="ECO:0007669"/>
    <property type="project" value="UniProtKB-UniRule"/>
</dbReference>
<dbReference type="GO" id="GO:0000731">
    <property type="term" value="P:DNA synthesis involved in DNA repair"/>
    <property type="evidence" value="ECO:0007669"/>
    <property type="project" value="TreeGrafter"/>
</dbReference>
<dbReference type="GO" id="GO:0006302">
    <property type="term" value="P:double-strand break repair"/>
    <property type="evidence" value="ECO:0007669"/>
    <property type="project" value="TreeGrafter"/>
</dbReference>
<dbReference type="GO" id="GO:0009432">
    <property type="term" value="P:SOS response"/>
    <property type="evidence" value="ECO:0007669"/>
    <property type="project" value="UniProtKB-UniRule"/>
</dbReference>
<dbReference type="CDD" id="cd03242">
    <property type="entry name" value="ABC_RecF"/>
    <property type="match status" value="1"/>
</dbReference>
<dbReference type="Gene3D" id="3.40.50.300">
    <property type="entry name" value="P-loop containing nucleotide triphosphate hydrolases"/>
    <property type="match status" value="1"/>
</dbReference>
<dbReference type="Gene3D" id="1.20.1050.90">
    <property type="entry name" value="RecF/RecN/SMC, N-terminal domain"/>
    <property type="match status" value="1"/>
</dbReference>
<dbReference type="HAMAP" id="MF_00365">
    <property type="entry name" value="RecF"/>
    <property type="match status" value="1"/>
</dbReference>
<dbReference type="InterPro" id="IPR003593">
    <property type="entry name" value="AAA+_ATPase"/>
</dbReference>
<dbReference type="InterPro" id="IPR001238">
    <property type="entry name" value="DNA-binding_RecF"/>
</dbReference>
<dbReference type="InterPro" id="IPR018078">
    <property type="entry name" value="DNA-binding_RecF_CS"/>
</dbReference>
<dbReference type="InterPro" id="IPR027417">
    <property type="entry name" value="P-loop_NTPase"/>
</dbReference>
<dbReference type="InterPro" id="IPR003395">
    <property type="entry name" value="RecF/RecN/SMC_N"/>
</dbReference>
<dbReference type="InterPro" id="IPR042174">
    <property type="entry name" value="RecF_2"/>
</dbReference>
<dbReference type="NCBIfam" id="TIGR00611">
    <property type="entry name" value="recf"/>
    <property type="match status" value="1"/>
</dbReference>
<dbReference type="PANTHER" id="PTHR32182">
    <property type="entry name" value="DNA REPLICATION AND REPAIR PROTEIN RECF"/>
    <property type="match status" value="1"/>
</dbReference>
<dbReference type="PANTHER" id="PTHR32182:SF0">
    <property type="entry name" value="DNA REPLICATION AND REPAIR PROTEIN RECF"/>
    <property type="match status" value="1"/>
</dbReference>
<dbReference type="Pfam" id="PF02463">
    <property type="entry name" value="SMC_N"/>
    <property type="match status" value="1"/>
</dbReference>
<dbReference type="SMART" id="SM00382">
    <property type="entry name" value="AAA"/>
    <property type="match status" value="1"/>
</dbReference>
<dbReference type="SUPFAM" id="SSF52540">
    <property type="entry name" value="P-loop containing nucleoside triphosphate hydrolases"/>
    <property type="match status" value="1"/>
</dbReference>
<dbReference type="PROSITE" id="PS00617">
    <property type="entry name" value="RECF_1"/>
    <property type="match status" value="1"/>
</dbReference>
<dbReference type="PROSITE" id="PS00618">
    <property type="entry name" value="RECF_2"/>
    <property type="match status" value="1"/>
</dbReference>
<sequence length="374" mass="40534">MPHKVSLSRLKLTDFRNYAAASLSLDGRHAVLTGDNGAGKTNLMEAVSLLSPGRGLRRAAYGDITRVGAAGGFSIFAALDGMEGEVEIGTGIEAGEETTARRLRINGTPAKTADELTDHLRLLWLIPAMDGLFTGASSDRRRFLDRLVLSLDPAHGRRASDFERAMRSRNKLLDDGRFDPSWLAGIEEQMASLGIAMALARQEMLGLLTRLTEETLESSPFPSASLQLSGFMDGQFSRPSVDLEDDYRVMLAESRYRDAGAGRTLEGPHRTDLVVHHREKAMEAARCSTGEQKALLVGLVLAHARLVGNLTGHAPILLLDEIAAHLDENRRAALFDIIDGLGGQAFMTGTDRGMFTALGDRAQFFTVADGRVFG</sequence>
<organism>
    <name type="scientific">Rhizobium etli (strain ATCC 51251 / DSM 11541 / JCM 21823 / NBRC 15573 / CFN 42)</name>
    <dbReference type="NCBI Taxonomy" id="347834"/>
    <lineage>
        <taxon>Bacteria</taxon>
        <taxon>Pseudomonadati</taxon>
        <taxon>Pseudomonadota</taxon>
        <taxon>Alphaproteobacteria</taxon>
        <taxon>Hyphomicrobiales</taxon>
        <taxon>Rhizobiaceae</taxon>
        <taxon>Rhizobium/Agrobacterium group</taxon>
        <taxon>Rhizobium</taxon>
    </lineage>
</organism>
<proteinExistence type="inferred from homology"/>
<name>RECF_RHIEC</name>
<accession>Q2KDX0</accession>
<gene>
    <name evidence="1" type="primary">recF</name>
    <name type="ordered locus">RHE_CH00141</name>
</gene>
<reference key="1">
    <citation type="journal article" date="2006" name="Proc. Natl. Acad. Sci. U.S.A.">
        <title>The partitioned Rhizobium etli genome: genetic and metabolic redundancy in seven interacting replicons.</title>
        <authorList>
            <person name="Gonzalez V."/>
            <person name="Santamaria R.I."/>
            <person name="Bustos P."/>
            <person name="Hernandez-Gonzalez I."/>
            <person name="Medrano-Soto A."/>
            <person name="Moreno-Hagelsieb G."/>
            <person name="Janga S.C."/>
            <person name="Ramirez M.A."/>
            <person name="Jimenez-Jacinto V."/>
            <person name="Collado-Vides J."/>
            <person name="Davila G."/>
        </authorList>
    </citation>
    <scope>NUCLEOTIDE SEQUENCE [LARGE SCALE GENOMIC DNA]</scope>
    <source>
        <strain>ATCC 51251 / DSM 11541 / JCM 21823 / NBRC 15573 / CFN 42</strain>
    </source>
</reference>
<evidence type="ECO:0000255" key="1">
    <source>
        <dbReference type="HAMAP-Rule" id="MF_00365"/>
    </source>
</evidence>
<keyword id="KW-0067">ATP-binding</keyword>
<keyword id="KW-0963">Cytoplasm</keyword>
<keyword id="KW-0227">DNA damage</keyword>
<keyword id="KW-0234">DNA repair</keyword>
<keyword id="KW-0235">DNA replication</keyword>
<keyword id="KW-0238">DNA-binding</keyword>
<keyword id="KW-0547">Nucleotide-binding</keyword>
<keyword id="KW-1185">Reference proteome</keyword>
<keyword id="KW-0742">SOS response</keyword>
<feature type="chain" id="PRO_1000048562" description="DNA replication and repair protein RecF">
    <location>
        <begin position="1"/>
        <end position="374"/>
    </location>
</feature>
<feature type="binding site" evidence="1">
    <location>
        <begin position="34"/>
        <end position="41"/>
    </location>
    <ligand>
        <name>ATP</name>
        <dbReference type="ChEBI" id="CHEBI:30616"/>
    </ligand>
</feature>
<protein>
    <recommendedName>
        <fullName evidence="1">DNA replication and repair protein RecF</fullName>
    </recommendedName>
</protein>